<dbReference type="EMBL" id="X54844">
    <property type="protein sequence ID" value="CAA38613.1"/>
    <property type="molecule type" value="Genomic_DNA"/>
</dbReference>
<dbReference type="PIR" id="S20868">
    <property type="entry name" value="S20868"/>
</dbReference>
<dbReference type="SMR" id="P29500"/>
<dbReference type="OrthoDB" id="1045146at2759"/>
<dbReference type="GO" id="GO:0005737">
    <property type="term" value="C:cytoplasm"/>
    <property type="evidence" value="ECO:0007669"/>
    <property type="project" value="UniProtKB-KW"/>
</dbReference>
<dbReference type="GO" id="GO:0005874">
    <property type="term" value="C:microtubule"/>
    <property type="evidence" value="ECO:0007669"/>
    <property type="project" value="UniProtKB-KW"/>
</dbReference>
<dbReference type="GO" id="GO:0005525">
    <property type="term" value="F:GTP binding"/>
    <property type="evidence" value="ECO:0007669"/>
    <property type="project" value="UniProtKB-KW"/>
</dbReference>
<dbReference type="GO" id="GO:0003924">
    <property type="term" value="F:GTPase activity"/>
    <property type="evidence" value="ECO:0007669"/>
    <property type="project" value="InterPro"/>
</dbReference>
<dbReference type="GO" id="GO:0046872">
    <property type="term" value="F:metal ion binding"/>
    <property type="evidence" value="ECO:0007669"/>
    <property type="project" value="UniProtKB-KW"/>
</dbReference>
<dbReference type="GO" id="GO:0005200">
    <property type="term" value="F:structural constituent of cytoskeleton"/>
    <property type="evidence" value="ECO:0007669"/>
    <property type="project" value="InterPro"/>
</dbReference>
<dbReference type="GO" id="GO:0007017">
    <property type="term" value="P:microtubule-based process"/>
    <property type="evidence" value="ECO:0007669"/>
    <property type="project" value="InterPro"/>
</dbReference>
<dbReference type="CDD" id="cd02187">
    <property type="entry name" value="beta_tubulin"/>
    <property type="match status" value="1"/>
</dbReference>
<dbReference type="FunFam" id="1.10.287.600:FF:000002">
    <property type="entry name" value="Tubulin beta chain"/>
    <property type="match status" value="1"/>
</dbReference>
<dbReference type="FunFam" id="3.30.1330.20:FF:000002">
    <property type="entry name" value="Tubulin beta chain"/>
    <property type="match status" value="1"/>
</dbReference>
<dbReference type="FunFam" id="3.40.50.1440:FF:000005">
    <property type="entry name" value="Tubulin beta chain"/>
    <property type="match status" value="1"/>
</dbReference>
<dbReference type="Gene3D" id="1.10.287.600">
    <property type="entry name" value="Helix hairpin bin"/>
    <property type="match status" value="1"/>
</dbReference>
<dbReference type="Gene3D" id="3.30.1330.20">
    <property type="entry name" value="Tubulin/FtsZ, C-terminal domain"/>
    <property type="match status" value="1"/>
</dbReference>
<dbReference type="Gene3D" id="3.40.50.1440">
    <property type="entry name" value="Tubulin/FtsZ, GTPase domain"/>
    <property type="match status" value="1"/>
</dbReference>
<dbReference type="InterPro" id="IPR002453">
    <property type="entry name" value="Beta_tubulin"/>
</dbReference>
<dbReference type="InterPro" id="IPR008280">
    <property type="entry name" value="Tub_FtsZ_C"/>
</dbReference>
<dbReference type="InterPro" id="IPR000217">
    <property type="entry name" value="Tubulin"/>
</dbReference>
<dbReference type="InterPro" id="IPR037103">
    <property type="entry name" value="Tubulin/FtsZ-like_C"/>
</dbReference>
<dbReference type="InterPro" id="IPR018316">
    <property type="entry name" value="Tubulin/FtsZ_2-layer-sand-dom"/>
</dbReference>
<dbReference type="InterPro" id="IPR036525">
    <property type="entry name" value="Tubulin/FtsZ_GTPase_sf"/>
</dbReference>
<dbReference type="InterPro" id="IPR023123">
    <property type="entry name" value="Tubulin_C"/>
</dbReference>
<dbReference type="InterPro" id="IPR017975">
    <property type="entry name" value="Tubulin_CS"/>
</dbReference>
<dbReference type="InterPro" id="IPR003008">
    <property type="entry name" value="Tubulin_FtsZ_GTPase"/>
</dbReference>
<dbReference type="PANTHER" id="PTHR11588">
    <property type="entry name" value="TUBULIN"/>
    <property type="match status" value="1"/>
</dbReference>
<dbReference type="Pfam" id="PF00091">
    <property type="entry name" value="Tubulin"/>
    <property type="match status" value="1"/>
</dbReference>
<dbReference type="Pfam" id="PF03953">
    <property type="entry name" value="Tubulin_C"/>
    <property type="match status" value="1"/>
</dbReference>
<dbReference type="PRINTS" id="PR01163">
    <property type="entry name" value="BETATUBULIN"/>
</dbReference>
<dbReference type="PRINTS" id="PR01161">
    <property type="entry name" value="TUBULIN"/>
</dbReference>
<dbReference type="SMART" id="SM00864">
    <property type="entry name" value="Tubulin"/>
    <property type="match status" value="1"/>
</dbReference>
<dbReference type="SMART" id="SM00865">
    <property type="entry name" value="Tubulin_C"/>
    <property type="match status" value="1"/>
</dbReference>
<dbReference type="SUPFAM" id="SSF55307">
    <property type="entry name" value="Tubulin C-terminal domain-like"/>
    <property type="match status" value="1"/>
</dbReference>
<dbReference type="SUPFAM" id="SSF52490">
    <property type="entry name" value="Tubulin nucleotide-binding domain-like"/>
    <property type="match status" value="1"/>
</dbReference>
<dbReference type="PROSITE" id="PS00227">
    <property type="entry name" value="TUBULIN"/>
    <property type="match status" value="1"/>
</dbReference>
<gene>
    <name type="primary">TUBB1</name>
    <name type="synonym">TUB1</name>
</gene>
<reference key="1">
    <citation type="journal article" date="1992" name="Plant Mol. Biol.">
        <title>The beta-tubulin gene family of pea: primary structures, genomic organization and intron-dependent evolution of genes.</title>
        <authorList>
            <person name="Liaud M.-F."/>
            <person name="Brinkmann H."/>
            <person name="Cerff R."/>
        </authorList>
    </citation>
    <scope>NUCLEOTIDE SEQUENCE [GENOMIC DNA]</scope>
    <source>
        <strain>cv. Rosakrone</strain>
    </source>
</reference>
<accession>P29500</accession>
<evidence type="ECO:0000250" key="1">
    <source>
        <dbReference type="UniProtKB" id="P68363"/>
    </source>
</evidence>
<evidence type="ECO:0000250" key="2">
    <source>
        <dbReference type="UniProtKB" id="Q13509"/>
    </source>
</evidence>
<evidence type="ECO:0000256" key="3">
    <source>
        <dbReference type="SAM" id="MobiDB-lite"/>
    </source>
</evidence>
<evidence type="ECO:0000305" key="4"/>
<name>TBB1_PEA</name>
<feature type="chain" id="PRO_0000048371" description="Tubulin beta-1 chain">
    <location>
        <begin position="1"/>
        <end position="450"/>
    </location>
</feature>
<feature type="region of interest" description="Disordered" evidence="3">
    <location>
        <begin position="426"/>
        <end position="450"/>
    </location>
</feature>
<feature type="compositionally biased region" description="Acidic residues" evidence="3">
    <location>
        <begin position="429"/>
        <end position="444"/>
    </location>
</feature>
<feature type="binding site" evidence="2">
    <location>
        <position position="11"/>
    </location>
    <ligand>
        <name>GTP</name>
        <dbReference type="ChEBI" id="CHEBI:37565"/>
    </ligand>
</feature>
<feature type="binding site" evidence="1">
    <location>
        <position position="69"/>
    </location>
    <ligand>
        <name>GTP</name>
        <dbReference type="ChEBI" id="CHEBI:37565"/>
    </ligand>
</feature>
<feature type="binding site" evidence="1">
    <location>
        <position position="69"/>
    </location>
    <ligand>
        <name>Mg(2+)</name>
        <dbReference type="ChEBI" id="CHEBI:18420"/>
    </ligand>
</feature>
<feature type="binding site" evidence="2">
    <location>
        <position position="138"/>
    </location>
    <ligand>
        <name>GTP</name>
        <dbReference type="ChEBI" id="CHEBI:37565"/>
    </ligand>
</feature>
<feature type="binding site" evidence="2">
    <location>
        <position position="142"/>
    </location>
    <ligand>
        <name>GTP</name>
        <dbReference type="ChEBI" id="CHEBI:37565"/>
    </ligand>
</feature>
<feature type="binding site" evidence="2">
    <location>
        <position position="143"/>
    </location>
    <ligand>
        <name>GTP</name>
        <dbReference type="ChEBI" id="CHEBI:37565"/>
    </ligand>
</feature>
<feature type="binding site" evidence="2">
    <location>
        <position position="144"/>
    </location>
    <ligand>
        <name>GTP</name>
        <dbReference type="ChEBI" id="CHEBI:37565"/>
    </ligand>
</feature>
<feature type="binding site" evidence="2">
    <location>
        <position position="204"/>
    </location>
    <ligand>
        <name>GTP</name>
        <dbReference type="ChEBI" id="CHEBI:37565"/>
    </ligand>
</feature>
<feature type="binding site" evidence="2">
    <location>
        <position position="226"/>
    </location>
    <ligand>
        <name>GTP</name>
        <dbReference type="ChEBI" id="CHEBI:37565"/>
    </ligand>
</feature>
<keyword id="KW-0963">Cytoplasm</keyword>
<keyword id="KW-0206">Cytoskeleton</keyword>
<keyword id="KW-0342">GTP-binding</keyword>
<keyword id="KW-0460">Magnesium</keyword>
<keyword id="KW-0479">Metal-binding</keyword>
<keyword id="KW-0493">Microtubule</keyword>
<keyword id="KW-0547">Nucleotide-binding</keyword>
<proteinExistence type="inferred from homology"/>
<protein>
    <recommendedName>
        <fullName>Tubulin beta-1 chain</fullName>
    </recommendedName>
    <alternativeName>
        <fullName>Beta-1-tubulin</fullName>
    </alternativeName>
</protein>
<comment type="function">
    <text>Tubulin is the major constituent of microtubules, a cylinder consisting of laterally associated linear protofilaments composed of alpha- and beta-tubulin heterodimers. Microtubules grow by the addition of GTP-tubulin dimers to the microtubule end, where a stabilizing cap forms. Below the cap, tubulin dimers are in GDP-bound state, owing to GTPase activity of alpha-tubulin.</text>
</comment>
<comment type="cofactor">
    <cofactor evidence="1">
        <name>Mg(2+)</name>
        <dbReference type="ChEBI" id="CHEBI:18420"/>
    </cofactor>
</comment>
<comment type="subunit">
    <text>Dimer of alpha and beta chains. A typical microtubule is a hollow water-filled tube with an outer diameter of 25 nm and an inner diameter of 15 nM. Alpha-beta heterodimers associate head-to-tail to form protofilaments running lengthwise along the microtubule wall with the beta-tubulin subunit facing the microtubule plus end conferring a structural polarity. Microtubules usually have 13 protofilaments but different protofilament numbers can be found in some organisms and specialized cells.</text>
</comment>
<comment type="subcellular location">
    <subcellularLocation>
        <location>Cytoplasm</location>
        <location>Cytoskeleton</location>
    </subcellularLocation>
</comment>
<comment type="similarity">
    <text evidence="4">Belongs to the tubulin family.</text>
</comment>
<organism>
    <name type="scientific">Pisum sativum</name>
    <name type="common">Garden pea</name>
    <name type="synonym">Lathyrus oleraceus</name>
    <dbReference type="NCBI Taxonomy" id="3888"/>
    <lineage>
        <taxon>Eukaryota</taxon>
        <taxon>Viridiplantae</taxon>
        <taxon>Streptophyta</taxon>
        <taxon>Embryophyta</taxon>
        <taxon>Tracheophyta</taxon>
        <taxon>Spermatophyta</taxon>
        <taxon>Magnoliopsida</taxon>
        <taxon>eudicotyledons</taxon>
        <taxon>Gunneridae</taxon>
        <taxon>Pentapetalae</taxon>
        <taxon>rosids</taxon>
        <taxon>fabids</taxon>
        <taxon>Fabales</taxon>
        <taxon>Fabaceae</taxon>
        <taxon>Papilionoideae</taxon>
        <taxon>50 kb inversion clade</taxon>
        <taxon>NPAAA clade</taxon>
        <taxon>Hologalegina</taxon>
        <taxon>IRL clade</taxon>
        <taxon>Fabeae</taxon>
        <taxon>Pisum</taxon>
    </lineage>
</organism>
<sequence length="450" mass="50566">MRQILHIQGGQCGNQIGAKFWEVVCAEHGIDPTGRYTGDSDLQLERIDVYYNEASGGRFVPRAVLMDLEPGTMDSIRSGPYGQIFRPDNFVFGQSGAGNNWAKGHYTEGAELIDSVLDVVRKEAENCDCLQGFQVCHSLGGGTGSGMGTLLISKIREEYPDRMMLTFSVFPSPKVSDTVVEPYNATLSVHQLVENADEVMVLDNEALYDICFRILKLSNPSFGDLNHLISATMSGVTCCLRFPGQLNSDLRKLAVNLIPFPRLHFFMVGFAPLTSRGSQQYRTLSVPELTQQMWDAKNMMCAADPRHGRYLTASAMFRGKMSTKEVDEQMMNVQNKNSSYFVEWIPNNVKSTVCDIPPTGLKMASTFIGNSTSIQEMFRRVSEQFTAMFRRKAFLHWYTGEGMDEMEFTEAESNMNDLVAEYQQYQDATADEDEYGEEEGDEEEYGQHDI</sequence>